<gene>
    <name evidence="1" type="primary">cysI</name>
    <name type="ordered locus">EcE24377A_3065</name>
</gene>
<protein>
    <recommendedName>
        <fullName evidence="1">Sulfite reductase [NADPH] hemoprotein beta-component</fullName>
        <shortName evidence="1">SiR-HP</shortName>
        <shortName evidence="1">SiRHP</shortName>
        <ecNumber evidence="1">1.8.1.2</ecNumber>
    </recommendedName>
</protein>
<organism>
    <name type="scientific">Escherichia coli O139:H28 (strain E24377A / ETEC)</name>
    <dbReference type="NCBI Taxonomy" id="331111"/>
    <lineage>
        <taxon>Bacteria</taxon>
        <taxon>Pseudomonadati</taxon>
        <taxon>Pseudomonadota</taxon>
        <taxon>Gammaproteobacteria</taxon>
        <taxon>Enterobacterales</taxon>
        <taxon>Enterobacteriaceae</taxon>
        <taxon>Escherichia</taxon>
    </lineage>
</organism>
<name>CYSI_ECO24</name>
<accession>A7ZQK6</accession>
<feature type="chain" id="PRO_1000068758" description="Sulfite reductase [NADPH] hemoprotein beta-component">
    <location>
        <begin position="1"/>
        <end position="570"/>
    </location>
</feature>
<feature type="binding site" evidence="1">
    <location>
        <position position="434"/>
    </location>
    <ligand>
        <name>[4Fe-4S] cluster</name>
        <dbReference type="ChEBI" id="CHEBI:49883"/>
    </ligand>
</feature>
<feature type="binding site" evidence="1">
    <location>
        <position position="440"/>
    </location>
    <ligand>
        <name>[4Fe-4S] cluster</name>
        <dbReference type="ChEBI" id="CHEBI:49883"/>
    </ligand>
</feature>
<feature type="binding site" evidence="1">
    <location>
        <position position="479"/>
    </location>
    <ligand>
        <name>[4Fe-4S] cluster</name>
        <dbReference type="ChEBI" id="CHEBI:49883"/>
    </ligand>
</feature>
<feature type="binding site" evidence="1">
    <location>
        <position position="483"/>
    </location>
    <ligand>
        <name>[4Fe-4S] cluster</name>
        <dbReference type="ChEBI" id="CHEBI:49883"/>
    </ligand>
</feature>
<feature type="binding site" description="axial binding residue" evidence="1">
    <location>
        <position position="483"/>
    </location>
    <ligand>
        <name>siroheme</name>
        <dbReference type="ChEBI" id="CHEBI:60052"/>
    </ligand>
    <ligandPart>
        <name>Fe</name>
        <dbReference type="ChEBI" id="CHEBI:18248"/>
    </ligandPart>
</feature>
<keyword id="KW-0004">4Fe-4S</keyword>
<keyword id="KW-0028">Amino-acid biosynthesis</keyword>
<keyword id="KW-0198">Cysteine biosynthesis</keyword>
<keyword id="KW-0349">Heme</keyword>
<keyword id="KW-0408">Iron</keyword>
<keyword id="KW-0411">Iron-sulfur</keyword>
<keyword id="KW-0479">Metal-binding</keyword>
<keyword id="KW-0521">NADP</keyword>
<keyword id="KW-0560">Oxidoreductase</keyword>
<keyword id="KW-1185">Reference proteome</keyword>
<proteinExistence type="inferred from homology"/>
<evidence type="ECO:0000255" key="1">
    <source>
        <dbReference type="HAMAP-Rule" id="MF_01540"/>
    </source>
</evidence>
<dbReference type="EC" id="1.8.1.2" evidence="1"/>
<dbReference type="EMBL" id="CP000800">
    <property type="protein sequence ID" value="ABV20906.1"/>
    <property type="molecule type" value="Genomic_DNA"/>
</dbReference>
<dbReference type="RefSeq" id="WP_001290706.1">
    <property type="nucleotide sequence ID" value="NC_009801.1"/>
</dbReference>
<dbReference type="SMR" id="A7ZQK6"/>
<dbReference type="GeneID" id="75205593"/>
<dbReference type="KEGG" id="ecw:EcE24377A_3065"/>
<dbReference type="HOGENOM" id="CLU_001975_3_2_6"/>
<dbReference type="UniPathway" id="UPA00140">
    <property type="reaction ID" value="UER00207"/>
</dbReference>
<dbReference type="Proteomes" id="UP000001122">
    <property type="component" value="Chromosome"/>
</dbReference>
<dbReference type="GO" id="GO:0009337">
    <property type="term" value="C:sulfite reductase complex (NADPH)"/>
    <property type="evidence" value="ECO:0007669"/>
    <property type="project" value="InterPro"/>
</dbReference>
<dbReference type="GO" id="GO:0051539">
    <property type="term" value="F:4 iron, 4 sulfur cluster binding"/>
    <property type="evidence" value="ECO:0007669"/>
    <property type="project" value="UniProtKB-KW"/>
</dbReference>
<dbReference type="GO" id="GO:0020037">
    <property type="term" value="F:heme binding"/>
    <property type="evidence" value="ECO:0007669"/>
    <property type="project" value="InterPro"/>
</dbReference>
<dbReference type="GO" id="GO:0046872">
    <property type="term" value="F:metal ion binding"/>
    <property type="evidence" value="ECO:0007669"/>
    <property type="project" value="UniProtKB-KW"/>
</dbReference>
<dbReference type="GO" id="GO:0050661">
    <property type="term" value="F:NADP binding"/>
    <property type="evidence" value="ECO:0007669"/>
    <property type="project" value="InterPro"/>
</dbReference>
<dbReference type="GO" id="GO:0050311">
    <property type="term" value="F:sulfite reductase (ferredoxin) activity"/>
    <property type="evidence" value="ECO:0007669"/>
    <property type="project" value="TreeGrafter"/>
</dbReference>
<dbReference type="GO" id="GO:0004783">
    <property type="term" value="F:sulfite reductase (NADPH) activity"/>
    <property type="evidence" value="ECO:0007669"/>
    <property type="project" value="UniProtKB-UniRule"/>
</dbReference>
<dbReference type="GO" id="GO:0019344">
    <property type="term" value="P:cysteine biosynthetic process"/>
    <property type="evidence" value="ECO:0007669"/>
    <property type="project" value="UniProtKB-KW"/>
</dbReference>
<dbReference type="GO" id="GO:0070814">
    <property type="term" value="P:hydrogen sulfide biosynthetic process"/>
    <property type="evidence" value="ECO:0007669"/>
    <property type="project" value="UniProtKB-UniRule"/>
</dbReference>
<dbReference type="GO" id="GO:0000103">
    <property type="term" value="P:sulfate assimilation"/>
    <property type="evidence" value="ECO:0007669"/>
    <property type="project" value="UniProtKB-UniRule"/>
</dbReference>
<dbReference type="FunFam" id="3.30.413.10:FF:000003">
    <property type="entry name" value="Sulfite reductase [NADPH] hemoprotein beta-component"/>
    <property type="match status" value="1"/>
</dbReference>
<dbReference type="FunFam" id="3.30.413.10:FF:000004">
    <property type="entry name" value="Sulfite reductase [NADPH] hemoprotein beta-component"/>
    <property type="match status" value="1"/>
</dbReference>
<dbReference type="Gene3D" id="3.30.413.10">
    <property type="entry name" value="Sulfite Reductase Hemoprotein, domain 1"/>
    <property type="match status" value="2"/>
</dbReference>
<dbReference type="HAMAP" id="MF_01540">
    <property type="entry name" value="CysI"/>
    <property type="match status" value="1"/>
</dbReference>
<dbReference type="InterPro" id="IPR011786">
    <property type="entry name" value="CysI"/>
</dbReference>
<dbReference type="InterPro" id="IPR005117">
    <property type="entry name" value="NiRdtase/SiRdtase_haem-b_fer"/>
</dbReference>
<dbReference type="InterPro" id="IPR036136">
    <property type="entry name" value="Nit/Sulf_reduc_fer-like_dom_sf"/>
</dbReference>
<dbReference type="InterPro" id="IPR006067">
    <property type="entry name" value="NO2/SO3_Rdtase_4Fe4S_dom"/>
</dbReference>
<dbReference type="InterPro" id="IPR045169">
    <property type="entry name" value="NO2/SO3_Rdtase_4Fe4S_prot"/>
</dbReference>
<dbReference type="InterPro" id="IPR045854">
    <property type="entry name" value="NO2/SO3_Rdtase_4Fe4S_sf"/>
</dbReference>
<dbReference type="InterPro" id="IPR006066">
    <property type="entry name" value="NO2/SO3_Rdtase_FeS/sirohaem_BS"/>
</dbReference>
<dbReference type="NCBIfam" id="TIGR02041">
    <property type="entry name" value="CysI"/>
    <property type="match status" value="1"/>
</dbReference>
<dbReference type="NCBIfam" id="NF010029">
    <property type="entry name" value="PRK13504.1"/>
    <property type="match status" value="1"/>
</dbReference>
<dbReference type="PANTHER" id="PTHR11493:SF47">
    <property type="entry name" value="SULFITE REDUCTASE [NADPH] SUBUNIT BETA"/>
    <property type="match status" value="1"/>
</dbReference>
<dbReference type="PANTHER" id="PTHR11493">
    <property type="entry name" value="SULFITE REDUCTASE [NADPH] SUBUNIT BETA-RELATED"/>
    <property type="match status" value="1"/>
</dbReference>
<dbReference type="Pfam" id="PF01077">
    <property type="entry name" value="NIR_SIR"/>
    <property type="match status" value="1"/>
</dbReference>
<dbReference type="Pfam" id="PF03460">
    <property type="entry name" value="NIR_SIR_ferr"/>
    <property type="match status" value="2"/>
</dbReference>
<dbReference type="PRINTS" id="PR00397">
    <property type="entry name" value="SIROHAEM"/>
</dbReference>
<dbReference type="SUPFAM" id="SSF56014">
    <property type="entry name" value="Nitrite and sulphite reductase 4Fe-4S domain-like"/>
    <property type="match status" value="2"/>
</dbReference>
<dbReference type="SUPFAM" id="SSF55124">
    <property type="entry name" value="Nitrite/Sulfite reductase N-terminal domain-like"/>
    <property type="match status" value="2"/>
</dbReference>
<dbReference type="PROSITE" id="PS00365">
    <property type="entry name" value="NIR_SIR"/>
    <property type="match status" value="1"/>
</dbReference>
<sequence length="570" mass="63960">MSEKHPGPLVVEGKLTDAERMKLESNYLRGTIAEDLNDGLTGGFKGDNFLLIRFHGMYQQDDRDIRAERAEQKLEPRHAMLLRCRLPGGVITTKQWQAIDKFAGENTIYGSIRLTNRQTFQFHGILKKNVKPVHQMLHSVGLDALATANDMNRNVLCTSNPYESQLHAEAYEWAKKISEHLLPRTRAYAEIWLDQEKVATTDEEPILGQTYLPRKFKTTVVIPPQNDIDLHANDMNFVAIAENGKLVGFNLLVGGGLSIEHGNKKTYARTASEFGYLPLEHTLAVAEAVVTTQRDWGNRTDRKNAKTKYTLERVGVETFKAEVERRAGIKFEPIRPYEFTGRGDRIGWVKGIDDNWHLTLFIENGRILDYPGRPLKTGLLEIAKIHKGDFRITANQNLIIAGVPESEKAKIEKIAKESGLMNAVTPQRENSMACVSFPTCPLAMAEAERFLPSFIDNIDNLMAKHGVSDEHIVMRVTGCPNGCGRAMLAEVGLVGKAPGRYNLHLGGNRIGTRIPRMYKENITEPEILASLDELIGRWAKEREAGEGFGDFTVRAGIIRPVLDPARDLWD</sequence>
<reference key="1">
    <citation type="journal article" date="2008" name="J. Bacteriol.">
        <title>The pangenome structure of Escherichia coli: comparative genomic analysis of E. coli commensal and pathogenic isolates.</title>
        <authorList>
            <person name="Rasko D.A."/>
            <person name="Rosovitz M.J."/>
            <person name="Myers G.S.A."/>
            <person name="Mongodin E.F."/>
            <person name="Fricke W.F."/>
            <person name="Gajer P."/>
            <person name="Crabtree J."/>
            <person name="Sebaihia M."/>
            <person name="Thomson N.R."/>
            <person name="Chaudhuri R."/>
            <person name="Henderson I.R."/>
            <person name="Sperandio V."/>
            <person name="Ravel J."/>
        </authorList>
    </citation>
    <scope>NUCLEOTIDE SEQUENCE [LARGE SCALE GENOMIC DNA]</scope>
    <source>
        <strain>E24377A / ETEC</strain>
    </source>
</reference>
<comment type="function">
    <text evidence="1">Component of the sulfite reductase complex that catalyzes the 6-electron reduction of sulfite to sulfide. This is one of several activities required for the biosynthesis of L-cysteine from sulfate.</text>
</comment>
<comment type="catalytic activity">
    <reaction evidence="1">
        <text>hydrogen sulfide + 3 NADP(+) + 3 H2O = sulfite + 3 NADPH + 4 H(+)</text>
        <dbReference type="Rhea" id="RHEA:13801"/>
        <dbReference type="ChEBI" id="CHEBI:15377"/>
        <dbReference type="ChEBI" id="CHEBI:15378"/>
        <dbReference type="ChEBI" id="CHEBI:17359"/>
        <dbReference type="ChEBI" id="CHEBI:29919"/>
        <dbReference type="ChEBI" id="CHEBI:57783"/>
        <dbReference type="ChEBI" id="CHEBI:58349"/>
        <dbReference type="EC" id="1.8.1.2"/>
    </reaction>
</comment>
<comment type="cofactor">
    <cofactor evidence="1">
        <name>siroheme</name>
        <dbReference type="ChEBI" id="CHEBI:60052"/>
    </cofactor>
    <text evidence="1">Binds 1 siroheme per subunit.</text>
</comment>
<comment type="cofactor">
    <cofactor evidence="1">
        <name>[4Fe-4S] cluster</name>
        <dbReference type="ChEBI" id="CHEBI:49883"/>
    </cofactor>
    <text evidence="1">Binds 1 [4Fe-4S] cluster per subunit.</text>
</comment>
<comment type="pathway">
    <text evidence="1">Sulfur metabolism; hydrogen sulfide biosynthesis; hydrogen sulfide from sulfite (NADPH route): step 1/1.</text>
</comment>
<comment type="subunit">
    <text evidence="1">Alpha(8)-beta(8). The alpha component is a flavoprotein, the beta component is a hemoprotein.</text>
</comment>
<comment type="similarity">
    <text evidence="1">Belongs to the nitrite and sulfite reductase 4Fe-4S domain family.</text>
</comment>